<sequence length="1620" mass="185361">MSTIGNNASSIGNTPILGSVPSNIAAAPPTTTTTTTTTTTTTTTTPTTTTPTTTTTTTNTLNTMIASTTPLSTTPTNVPIKPPLLINQFGKPLPNLSSTASSPRTPIKPFIGTPNNPSTPSSLIALSSPIGGGGVGSTPFSNQFIGYSGGGGGSSSSSNNSTIAYNGSTPYKPVLTGSGGIGGGGSGSSTPNRGRFSGKTSNIGGGGGLNNLNVGGGVGVIVGGIGNGSSNSGVGGTTTYQASQLVVTNISKGTTTKRSFPIPTNITPPKCPLPNWFTSLDNIHQVEINNLPEFFQDDNENGNGNGNGSGSGSNNMTEIDYDEIDEDEYSYVDSVEYKYIKKKQKLQLSNKELYKIYRDYMITSYQKNPYQYLSVTDVKNHFINQNKKTFKVNIRSIIKIFDFLEYWDLINCFVNSGDYMNIISPGVFNYCNEFYQSFYRKKFKHEEREKEEKERLEREEKERLEREEKQEKEEKERLEKEEKERLEREEKQEKEEKEEKEEKEENEEKEEKEEKEKEEKEEKEKQEKEDDKEKQENENEQEKIEKKENKNDSQNKEIKENHDKKDETTDSNNTTTTTTTTTTTSTNTLVAESSSSSSTETDDNDKEMKEQPVQENKDKEMMETDTTKENNGVETTETTNQTTDSIETDKEMKDQPIINLEKEKSSEDKEINDDHNENEKQDKDKENEKEKEDKTENGNEKENEKENEKENEKENEKENENEKENENEKENENKKEKEKENKKENENENEKVDEKIEIDKEGINEDEKMDEEKEEKINNKKEDEEVESEIKKDKLKENEEVEGEIEGENDEGEVVEEDEDEEMEIEEDEEDEEDEKSKEPKKLTTTKSANDQLIKKKKPLFECKKCKADCSNVRYQLVNNSTALDGNILPEYFYPMIICVNCFSSGNYENFIQSSSFQRIEQHQPEEFGWTDIETLLLLEGIEIFRDNWQEISDYIGGSKTPEQCLTHFIRLPIEDEFLERKISSFPVGSLSKKEIDSNNPFSITYGVNNPIMSLVAFFSSYSQPPLGLLASKAAKVILEILNDPKYQQPSKEELERIQKEKDDKEKEDKEKELKEKESKEKELKEKDDKEKEKEKELKEREDKEKEEDKEAKDKVDKEKEEDKQKQDKEKEEDKEKQEKDKEEDKDKEKEENKEDKEKEGTDKEGKDKEDKEIKEDKEKEEKDKEAIGDHDKSDSTNTTTTKEMEIEKQDSSTSTNKETVEMNQDDHVKIDEKETKENDKKSITEEENQQKDDNDNNNNSHNHNKEIEKDDNKENENEKEKENENKNEKQIENENEKEKDLNNLSESQSSNDQSKSNEQMSSDNQESKENSESNSNTQITSKEQNITTDQSEKPKETPTTTTPATLPATPISESNTTTTNTIVDKENNNETNKTNENNSNNNNTNEENKTAESNNMETVVENNEKKPVDNDDNNNNNNNSNDKMDVDNKNNNNNNNVDKNEKDKDEENEMEEVEEEENDLNDEKKENGVDGVGEEDDDEDVEMETASVDIRKSTTTTTKTSLLMMSPPPPKKSRIPEPNPEYFSEAAIQAATAAAFETIQNESKKYYELEEQEIRDLIRSIVICQIRKLELLWKFYVTYEQSLEKEKDYYEKITKSHLQ</sequence>
<evidence type="ECO:0000255" key="1">
    <source>
        <dbReference type="PROSITE-ProRule" id="PRU00247"/>
    </source>
</evidence>
<evidence type="ECO:0000255" key="2">
    <source>
        <dbReference type="PROSITE-ProRule" id="PRU00624"/>
    </source>
</evidence>
<evidence type="ECO:0000256" key="3">
    <source>
        <dbReference type="SAM" id="MobiDB-lite"/>
    </source>
</evidence>
<reference key="1">
    <citation type="journal article" date="2005" name="Nature">
        <title>The genome of the social amoeba Dictyostelium discoideum.</title>
        <authorList>
            <person name="Eichinger L."/>
            <person name="Pachebat J.A."/>
            <person name="Gloeckner G."/>
            <person name="Rajandream M.A."/>
            <person name="Sucgang R."/>
            <person name="Berriman M."/>
            <person name="Song J."/>
            <person name="Olsen R."/>
            <person name="Szafranski K."/>
            <person name="Xu Q."/>
            <person name="Tunggal B."/>
            <person name="Kummerfeld S."/>
            <person name="Madera M."/>
            <person name="Konfortov B.A."/>
            <person name="Rivero F."/>
            <person name="Bankier A.T."/>
            <person name="Lehmann R."/>
            <person name="Hamlin N."/>
            <person name="Davies R."/>
            <person name="Gaudet P."/>
            <person name="Fey P."/>
            <person name="Pilcher K."/>
            <person name="Chen G."/>
            <person name="Saunders D."/>
            <person name="Sodergren E.J."/>
            <person name="Davis P."/>
            <person name="Kerhornou A."/>
            <person name="Nie X."/>
            <person name="Hall N."/>
            <person name="Anjard C."/>
            <person name="Hemphill L."/>
            <person name="Bason N."/>
            <person name="Farbrother P."/>
            <person name="Desany B."/>
            <person name="Just E."/>
            <person name="Morio T."/>
            <person name="Rost R."/>
            <person name="Churcher C.M."/>
            <person name="Cooper J."/>
            <person name="Haydock S."/>
            <person name="van Driessche N."/>
            <person name="Cronin A."/>
            <person name="Goodhead I."/>
            <person name="Muzny D.M."/>
            <person name="Mourier T."/>
            <person name="Pain A."/>
            <person name="Lu M."/>
            <person name="Harper D."/>
            <person name="Lindsay R."/>
            <person name="Hauser H."/>
            <person name="James K.D."/>
            <person name="Quiles M."/>
            <person name="Madan Babu M."/>
            <person name="Saito T."/>
            <person name="Buchrieser C."/>
            <person name="Wardroper A."/>
            <person name="Felder M."/>
            <person name="Thangavelu M."/>
            <person name="Johnson D."/>
            <person name="Knights A."/>
            <person name="Loulseged H."/>
            <person name="Mungall K.L."/>
            <person name="Oliver K."/>
            <person name="Price C."/>
            <person name="Quail M.A."/>
            <person name="Urushihara H."/>
            <person name="Hernandez J."/>
            <person name="Rabbinowitsch E."/>
            <person name="Steffen D."/>
            <person name="Sanders M."/>
            <person name="Ma J."/>
            <person name="Kohara Y."/>
            <person name="Sharp S."/>
            <person name="Simmonds M.N."/>
            <person name="Spiegler S."/>
            <person name="Tivey A."/>
            <person name="Sugano S."/>
            <person name="White B."/>
            <person name="Walker D."/>
            <person name="Woodward J.R."/>
            <person name="Winckler T."/>
            <person name="Tanaka Y."/>
            <person name="Shaulsky G."/>
            <person name="Schleicher M."/>
            <person name="Weinstock G.M."/>
            <person name="Rosenthal A."/>
            <person name="Cox E.C."/>
            <person name="Chisholm R.L."/>
            <person name="Gibbs R.A."/>
            <person name="Loomis W.F."/>
            <person name="Platzer M."/>
            <person name="Kay R.R."/>
            <person name="Williams J.G."/>
            <person name="Dear P.H."/>
            <person name="Noegel A.A."/>
            <person name="Barrell B.G."/>
            <person name="Kuspa A."/>
        </authorList>
    </citation>
    <scope>NUCLEOTIDE SEQUENCE [LARGE SCALE GENOMIC DNA]</scope>
    <source>
        <strain>AX4</strain>
    </source>
</reference>
<dbReference type="EMBL" id="AAFI02000109">
    <property type="protein sequence ID" value="EAL63285.1"/>
    <property type="molecule type" value="Genomic_DNA"/>
</dbReference>
<dbReference type="RefSeq" id="XP_636792.1">
    <property type="nucleotide sequence ID" value="XM_631700.1"/>
</dbReference>
<dbReference type="SMR" id="Q54J55"/>
<dbReference type="STRING" id="44689.Q54J55"/>
<dbReference type="GlyGen" id="Q54J55">
    <property type="glycosylation" value="2 sites"/>
</dbReference>
<dbReference type="PaxDb" id="44689-DDB0220513"/>
<dbReference type="EnsemblProtists" id="EAL63285">
    <property type="protein sequence ID" value="EAL63285"/>
    <property type="gene ID" value="DDB_G0288285"/>
</dbReference>
<dbReference type="GeneID" id="8626549"/>
<dbReference type="KEGG" id="ddi:DDB_G0288285"/>
<dbReference type="dictyBase" id="DDB_G0288285">
    <property type="gene designation" value="mybX"/>
</dbReference>
<dbReference type="VEuPathDB" id="AmoebaDB:DDB_G0288285"/>
<dbReference type="eggNOG" id="KOG1279">
    <property type="taxonomic scope" value="Eukaryota"/>
</dbReference>
<dbReference type="HOGENOM" id="CLU_243583_0_0_1"/>
<dbReference type="InParanoid" id="Q54J55"/>
<dbReference type="OMA" id="WDLINCF"/>
<dbReference type="PRO" id="PR:Q54J55"/>
<dbReference type="Proteomes" id="UP000002195">
    <property type="component" value="Chromosome 5"/>
</dbReference>
<dbReference type="GO" id="GO:0005634">
    <property type="term" value="C:nucleus"/>
    <property type="evidence" value="ECO:0007669"/>
    <property type="project" value="UniProtKB-SubCell"/>
</dbReference>
<dbReference type="CDD" id="cd00167">
    <property type="entry name" value="SANT"/>
    <property type="match status" value="1"/>
</dbReference>
<dbReference type="FunFam" id="1.10.10.60:FF:000014">
    <property type="entry name" value="SWI/SNF complex subunit SMARCC2 isoform C"/>
    <property type="match status" value="1"/>
</dbReference>
<dbReference type="Gene3D" id="1.10.10.60">
    <property type="entry name" value="Homeodomain-like"/>
    <property type="match status" value="1"/>
</dbReference>
<dbReference type="Gene3D" id="1.10.10.10">
    <property type="entry name" value="Winged helix-like DNA-binding domain superfamily/Winged helix DNA-binding domain"/>
    <property type="match status" value="1"/>
</dbReference>
<dbReference type="InterPro" id="IPR009057">
    <property type="entry name" value="Homeodomain-like_sf"/>
</dbReference>
<dbReference type="InterPro" id="IPR001005">
    <property type="entry name" value="SANT/Myb"/>
</dbReference>
<dbReference type="InterPro" id="IPR017884">
    <property type="entry name" value="SANT_dom"/>
</dbReference>
<dbReference type="InterPro" id="IPR007526">
    <property type="entry name" value="SWIRM"/>
</dbReference>
<dbReference type="InterPro" id="IPR036388">
    <property type="entry name" value="WH-like_DNA-bd_sf"/>
</dbReference>
<dbReference type="PANTHER" id="PTHR45981">
    <property type="entry name" value="LD02310P"/>
    <property type="match status" value="1"/>
</dbReference>
<dbReference type="Pfam" id="PF04433">
    <property type="entry name" value="SWIRM"/>
    <property type="match status" value="1"/>
</dbReference>
<dbReference type="SMART" id="SM00717">
    <property type="entry name" value="SANT"/>
    <property type="match status" value="1"/>
</dbReference>
<dbReference type="SUPFAM" id="SSF46689">
    <property type="entry name" value="Homeodomain-like"/>
    <property type="match status" value="2"/>
</dbReference>
<dbReference type="PROSITE" id="PS51293">
    <property type="entry name" value="SANT"/>
    <property type="match status" value="1"/>
</dbReference>
<dbReference type="PROSITE" id="PS50934">
    <property type="entry name" value="SWIRM"/>
    <property type="match status" value="1"/>
</dbReference>
<keyword id="KW-0539">Nucleus</keyword>
<keyword id="KW-1185">Reference proteome</keyword>
<name>MYBX_DICDI</name>
<feature type="chain" id="PRO_0000329396" description="Myb-like protein X">
    <location>
        <begin position="1"/>
        <end position="1620"/>
    </location>
</feature>
<feature type="domain" description="SWIRM" evidence="1">
    <location>
        <begin position="310"/>
        <end position="421"/>
    </location>
</feature>
<feature type="domain" description="SANT" evidence="2">
    <location>
        <begin position="925"/>
        <end position="977"/>
    </location>
</feature>
<feature type="region of interest" description="Disordered" evidence="3">
    <location>
        <begin position="1"/>
        <end position="57"/>
    </location>
</feature>
<feature type="region of interest" description="Disordered" evidence="3">
    <location>
        <begin position="176"/>
        <end position="204"/>
    </location>
</feature>
<feature type="region of interest" description="Disordered" evidence="3">
    <location>
        <begin position="294"/>
        <end position="318"/>
    </location>
</feature>
<feature type="region of interest" description="Disordered" evidence="3">
    <location>
        <begin position="450"/>
        <end position="849"/>
    </location>
</feature>
<feature type="region of interest" description="Disordered" evidence="3">
    <location>
        <begin position="1049"/>
        <end position="1506"/>
    </location>
</feature>
<feature type="compositionally biased region" description="Polar residues" evidence="3">
    <location>
        <begin position="1"/>
        <end position="13"/>
    </location>
</feature>
<feature type="compositionally biased region" description="Low complexity" evidence="3">
    <location>
        <begin position="28"/>
        <end position="57"/>
    </location>
</feature>
<feature type="compositionally biased region" description="Gly residues" evidence="3">
    <location>
        <begin position="177"/>
        <end position="187"/>
    </location>
</feature>
<feature type="compositionally biased region" description="Basic and acidic residues" evidence="3">
    <location>
        <begin position="450"/>
        <end position="497"/>
    </location>
</feature>
<feature type="compositionally biased region" description="Acidic residues" evidence="3">
    <location>
        <begin position="498"/>
        <end position="511"/>
    </location>
</feature>
<feature type="compositionally biased region" description="Basic and acidic residues" evidence="3">
    <location>
        <begin position="512"/>
        <end position="568"/>
    </location>
</feature>
<feature type="compositionally biased region" description="Low complexity" evidence="3">
    <location>
        <begin position="570"/>
        <end position="598"/>
    </location>
</feature>
<feature type="compositionally biased region" description="Basic and acidic residues" evidence="3">
    <location>
        <begin position="606"/>
        <end position="628"/>
    </location>
</feature>
<feature type="compositionally biased region" description="Low complexity" evidence="3">
    <location>
        <begin position="629"/>
        <end position="645"/>
    </location>
</feature>
<feature type="compositionally biased region" description="Basic and acidic residues" evidence="3">
    <location>
        <begin position="647"/>
        <end position="798"/>
    </location>
</feature>
<feature type="compositionally biased region" description="Acidic residues" evidence="3">
    <location>
        <begin position="799"/>
        <end position="834"/>
    </location>
</feature>
<feature type="compositionally biased region" description="Basic and acidic residues" evidence="3">
    <location>
        <begin position="1051"/>
        <end position="1195"/>
    </location>
</feature>
<feature type="compositionally biased region" description="Basic and acidic residues" evidence="3">
    <location>
        <begin position="1219"/>
        <end position="1255"/>
    </location>
</feature>
<feature type="compositionally biased region" description="Basic and acidic residues" evidence="3">
    <location>
        <begin position="1264"/>
        <end position="1302"/>
    </location>
</feature>
<feature type="compositionally biased region" description="Low complexity" evidence="3">
    <location>
        <begin position="1303"/>
        <end position="1325"/>
    </location>
</feature>
<feature type="compositionally biased region" description="Polar residues" evidence="3">
    <location>
        <begin position="1338"/>
        <end position="1350"/>
    </location>
</feature>
<feature type="compositionally biased region" description="Low complexity" evidence="3">
    <location>
        <begin position="1358"/>
        <end position="1382"/>
    </location>
</feature>
<feature type="compositionally biased region" description="Low complexity" evidence="3">
    <location>
        <begin position="1390"/>
        <end position="1416"/>
    </location>
</feature>
<feature type="compositionally biased region" description="Acidic residues" evidence="3">
    <location>
        <begin position="1467"/>
        <end position="1481"/>
    </location>
</feature>
<feature type="compositionally biased region" description="Acidic residues" evidence="3">
    <location>
        <begin position="1493"/>
        <end position="1504"/>
    </location>
</feature>
<proteinExistence type="inferred from homology"/>
<organism>
    <name type="scientific">Dictyostelium discoideum</name>
    <name type="common">Social amoeba</name>
    <dbReference type="NCBI Taxonomy" id="44689"/>
    <lineage>
        <taxon>Eukaryota</taxon>
        <taxon>Amoebozoa</taxon>
        <taxon>Evosea</taxon>
        <taxon>Eumycetozoa</taxon>
        <taxon>Dictyostelia</taxon>
        <taxon>Dictyosteliales</taxon>
        <taxon>Dictyosteliaceae</taxon>
        <taxon>Dictyostelium</taxon>
    </lineage>
</organism>
<comment type="subcellular location">
    <subcellularLocation>
        <location evidence="2">Nucleus</location>
    </subcellularLocation>
</comment>
<accession>Q54J55</accession>
<gene>
    <name type="primary">mybX</name>
    <name type="ORF">DDB_G0288285</name>
</gene>
<protein>
    <recommendedName>
        <fullName>Myb-like protein X</fullName>
    </recommendedName>
</protein>